<comment type="function">
    <text evidence="2">Component of the ubiquinol-cytochrome c reductase complex (complex III or cytochrome b-c1 complex) that is part of the mitochondrial respiratory chain. The b-c1 complex mediates electron transfer from ubiquinol to cytochrome c. Contributes to the generation of a proton gradient across the mitochondrial membrane that is then used for ATP synthesis.</text>
</comment>
<comment type="cofactor">
    <cofactor evidence="2">
        <name>heme b</name>
        <dbReference type="ChEBI" id="CHEBI:60344"/>
    </cofactor>
    <text evidence="2">Binds 2 heme b groups non-covalently.</text>
</comment>
<comment type="subunit">
    <text evidence="2">The cytochrome bc1 complex contains 11 subunits: 3 respiratory subunits (MT-CYB, CYC1 and UQCRFS1), 2 core proteins (UQCRC1 and UQCRC2) and 6 low-molecular weight proteins (UQCRH/QCR6, UQCRB/QCR7, UQCRQ/QCR8, UQCR10/QCR9, UQCR11/QCR10 and a cleavage product of UQCRFS1). This cytochrome bc1 complex then forms a dimer.</text>
</comment>
<comment type="subcellular location">
    <subcellularLocation>
        <location evidence="2">Mitochondrion inner membrane</location>
        <topology evidence="2">Multi-pass membrane protein</topology>
    </subcellularLocation>
</comment>
<comment type="miscellaneous">
    <text evidence="1">Heme 1 (or BL or b562) is low-potential and absorbs at about 562 nm, and heme 2 (or BH or b566) is high-potential and absorbs at about 566 nm.</text>
</comment>
<comment type="similarity">
    <text evidence="3 4">Belongs to the cytochrome b family.</text>
</comment>
<comment type="caution">
    <text evidence="2">The full-length protein contains only eight transmembrane helices, not nine as predicted by bioinformatics tools.</text>
</comment>
<sequence>MTNIRKTHPLMKIVNNAFVDLPAPSNISSWWNFGSLLGICLVLQILTGLFLAMHYTSDTTTAFSSVTHICRDVNYGWIIRYMHANGASMFFICLFMHVGRGLYYGSYIFLETWNIGVILLFATMATAFMGYVLPWGQMSFWGATVITNLLSAIPYIGTDLVEWIWGGFSVDKATLTRFFAFHFILPFIIAALAMVHLLFLHETGSNNPTGIPSDADKIPFHPYYTIKDILGAMLLILILMLLVLFSPDLLGDPDNYTPANPLNTPPHIKPEWYFLFAYAILRSIPNKLGGVLALVLSILILVLVPFLHMSKQRSMMFRPISQCMFWILVADLLTLTWIGGQPVEHPYIIIGQLASIMYFLIILVLMPVASTIENNLLKW</sequence>
<accession>O78775</accession>
<keyword id="KW-0249">Electron transport</keyword>
<keyword id="KW-0349">Heme</keyword>
<keyword id="KW-0408">Iron</keyword>
<keyword id="KW-0472">Membrane</keyword>
<keyword id="KW-0479">Metal-binding</keyword>
<keyword id="KW-0496">Mitochondrion</keyword>
<keyword id="KW-0999">Mitochondrion inner membrane</keyword>
<keyword id="KW-0679">Respiratory chain</keyword>
<keyword id="KW-0812">Transmembrane</keyword>
<keyword id="KW-1133">Transmembrane helix</keyword>
<keyword id="KW-0813">Transport</keyword>
<keyword id="KW-0830">Ubiquinone</keyword>
<reference key="1">
    <citation type="journal article" date="1999" name="J. Mammal. Evol.">
        <title>Molecular systematics of the subfamily Caprinae (Artiodactyla, Bovidae) as determined from cytochrome b sequences.</title>
        <authorList>
            <person name="Hassanin A."/>
            <person name="Pasquet E."/>
            <person name="Vigne J.-D."/>
        </authorList>
    </citation>
    <scope>NUCLEOTIDE SEQUENCE [GENOMIC DNA]</scope>
</reference>
<geneLocation type="mitochondrion"/>
<dbReference type="EMBL" id="AF034724">
    <property type="protein sequence ID" value="AAC31679.1"/>
    <property type="molecule type" value="Genomic_DNA"/>
</dbReference>
<dbReference type="RefSeq" id="YP_337836.1">
    <property type="nucleotide sequence ID" value="NC_007441.1"/>
</dbReference>
<dbReference type="SMR" id="O78775"/>
<dbReference type="GeneID" id="3703621"/>
<dbReference type="CTD" id="4519"/>
<dbReference type="GO" id="GO:0005743">
    <property type="term" value="C:mitochondrial inner membrane"/>
    <property type="evidence" value="ECO:0007669"/>
    <property type="project" value="UniProtKB-SubCell"/>
</dbReference>
<dbReference type="GO" id="GO:0045275">
    <property type="term" value="C:respiratory chain complex III"/>
    <property type="evidence" value="ECO:0007669"/>
    <property type="project" value="InterPro"/>
</dbReference>
<dbReference type="GO" id="GO:0046872">
    <property type="term" value="F:metal ion binding"/>
    <property type="evidence" value="ECO:0007669"/>
    <property type="project" value="UniProtKB-KW"/>
</dbReference>
<dbReference type="GO" id="GO:0008121">
    <property type="term" value="F:ubiquinol-cytochrome-c reductase activity"/>
    <property type="evidence" value="ECO:0007669"/>
    <property type="project" value="InterPro"/>
</dbReference>
<dbReference type="GO" id="GO:0006122">
    <property type="term" value="P:mitochondrial electron transport, ubiquinol to cytochrome c"/>
    <property type="evidence" value="ECO:0007669"/>
    <property type="project" value="TreeGrafter"/>
</dbReference>
<dbReference type="CDD" id="cd00290">
    <property type="entry name" value="cytochrome_b_C"/>
    <property type="match status" value="1"/>
</dbReference>
<dbReference type="CDD" id="cd00284">
    <property type="entry name" value="Cytochrome_b_N"/>
    <property type="match status" value="1"/>
</dbReference>
<dbReference type="FunFam" id="1.20.810.10:FF:000002">
    <property type="entry name" value="Cytochrome b"/>
    <property type="match status" value="1"/>
</dbReference>
<dbReference type="Gene3D" id="1.20.810.10">
    <property type="entry name" value="Cytochrome Bc1 Complex, Chain C"/>
    <property type="match status" value="1"/>
</dbReference>
<dbReference type="InterPro" id="IPR005798">
    <property type="entry name" value="Cyt_b/b6_C"/>
</dbReference>
<dbReference type="InterPro" id="IPR036150">
    <property type="entry name" value="Cyt_b/b6_C_sf"/>
</dbReference>
<dbReference type="InterPro" id="IPR005797">
    <property type="entry name" value="Cyt_b/b6_N"/>
</dbReference>
<dbReference type="InterPro" id="IPR027387">
    <property type="entry name" value="Cytb/b6-like_sf"/>
</dbReference>
<dbReference type="InterPro" id="IPR030689">
    <property type="entry name" value="Cytochrome_b"/>
</dbReference>
<dbReference type="InterPro" id="IPR048260">
    <property type="entry name" value="Cytochrome_b_C_euk/bac"/>
</dbReference>
<dbReference type="InterPro" id="IPR048259">
    <property type="entry name" value="Cytochrome_b_N_euk/bac"/>
</dbReference>
<dbReference type="InterPro" id="IPR016174">
    <property type="entry name" value="Di-haem_cyt_TM"/>
</dbReference>
<dbReference type="PANTHER" id="PTHR19271">
    <property type="entry name" value="CYTOCHROME B"/>
    <property type="match status" value="1"/>
</dbReference>
<dbReference type="PANTHER" id="PTHR19271:SF16">
    <property type="entry name" value="CYTOCHROME B"/>
    <property type="match status" value="1"/>
</dbReference>
<dbReference type="Pfam" id="PF00032">
    <property type="entry name" value="Cytochrom_B_C"/>
    <property type="match status" value="1"/>
</dbReference>
<dbReference type="Pfam" id="PF00033">
    <property type="entry name" value="Cytochrome_B"/>
    <property type="match status" value="1"/>
</dbReference>
<dbReference type="PIRSF" id="PIRSF038885">
    <property type="entry name" value="COB"/>
    <property type="match status" value="1"/>
</dbReference>
<dbReference type="SUPFAM" id="SSF81648">
    <property type="entry name" value="a domain/subunit of cytochrome bc1 complex (Ubiquinol-cytochrome c reductase)"/>
    <property type="match status" value="1"/>
</dbReference>
<dbReference type="SUPFAM" id="SSF81342">
    <property type="entry name" value="Transmembrane di-heme cytochromes"/>
    <property type="match status" value="1"/>
</dbReference>
<dbReference type="PROSITE" id="PS51003">
    <property type="entry name" value="CYTB_CTER"/>
    <property type="match status" value="1"/>
</dbReference>
<dbReference type="PROSITE" id="PS51002">
    <property type="entry name" value="CYTB_NTER"/>
    <property type="match status" value="1"/>
</dbReference>
<proteinExistence type="inferred from homology"/>
<evidence type="ECO:0000250" key="1"/>
<evidence type="ECO:0000250" key="2">
    <source>
        <dbReference type="UniProtKB" id="P00157"/>
    </source>
</evidence>
<evidence type="ECO:0000255" key="3">
    <source>
        <dbReference type="PROSITE-ProRule" id="PRU00967"/>
    </source>
</evidence>
<evidence type="ECO:0000255" key="4">
    <source>
        <dbReference type="PROSITE-ProRule" id="PRU00968"/>
    </source>
</evidence>
<feature type="chain" id="PRO_0000061339" description="Cytochrome b">
    <location>
        <begin position="1"/>
        <end position="379"/>
    </location>
</feature>
<feature type="transmembrane region" description="Helical" evidence="2">
    <location>
        <begin position="33"/>
        <end position="53"/>
    </location>
</feature>
<feature type="transmembrane region" description="Helical" evidence="2">
    <location>
        <begin position="77"/>
        <end position="98"/>
    </location>
</feature>
<feature type="transmembrane region" description="Helical" evidence="2">
    <location>
        <begin position="113"/>
        <end position="133"/>
    </location>
</feature>
<feature type="transmembrane region" description="Helical" evidence="2">
    <location>
        <begin position="178"/>
        <end position="198"/>
    </location>
</feature>
<feature type="transmembrane region" description="Helical" evidence="2">
    <location>
        <begin position="226"/>
        <end position="246"/>
    </location>
</feature>
<feature type="transmembrane region" description="Helical" evidence="2">
    <location>
        <begin position="288"/>
        <end position="308"/>
    </location>
</feature>
<feature type="transmembrane region" description="Helical" evidence="2">
    <location>
        <begin position="320"/>
        <end position="340"/>
    </location>
</feature>
<feature type="transmembrane region" description="Helical" evidence="2">
    <location>
        <begin position="347"/>
        <end position="367"/>
    </location>
</feature>
<feature type="binding site" description="axial binding residue" evidence="2">
    <location>
        <position position="83"/>
    </location>
    <ligand>
        <name>heme b</name>
        <dbReference type="ChEBI" id="CHEBI:60344"/>
        <label>b562</label>
    </ligand>
    <ligandPart>
        <name>Fe</name>
        <dbReference type="ChEBI" id="CHEBI:18248"/>
    </ligandPart>
</feature>
<feature type="binding site" description="axial binding residue" evidence="2">
    <location>
        <position position="97"/>
    </location>
    <ligand>
        <name>heme b</name>
        <dbReference type="ChEBI" id="CHEBI:60344"/>
        <label>b566</label>
    </ligand>
    <ligandPart>
        <name>Fe</name>
        <dbReference type="ChEBI" id="CHEBI:18248"/>
    </ligandPart>
</feature>
<feature type="binding site" description="axial binding residue" evidence="2">
    <location>
        <position position="182"/>
    </location>
    <ligand>
        <name>heme b</name>
        <dbReference type="ChEBI" id="CHEBI:60344"/>
        <label>b562</label>
    </ligand>
    <ligandPart>
        <name>Fe</name>
        <dbReference type="ChEBI" id="CHEBI:18248"/>
    </ligandPart>
</feature>
<feature type="binding site" description="axial binding residue" evidence="2">
    <location>
        <position position="196"/>
    </location>
    <ligand>
        <name>heme b</name>
        <dbReference type="ChEBI" id="CHEBI:60344"/>
        <label>b566</label>
    </ligand>
    <ligandPart>
        <name>Fe</name>
        <dbReference type="ChEBI" id="CHEBI:18248"/>
    </ligandPart>
</feature>
<feature type="binding site" evidence="2">
    <location>
        <position position="201"/>
    </location>
    <ligand>
        <name>a ubiquinone</name>
        <dbReference type="ChEBI" id="CHEBI:16389"/>
    </ligand>
</feature>
<organism>
    <name type="scientific">Pantholops hodgsonii</name>
    <name type="common">Chiru</name>
    <name type="synonym">Tibetan antelope</name>
    <dbReference type="NCBI Taxonomy" id="59538"/>
    <lineage>
        <taxon>Eukaryota</taxon>
        <taxon>Metazoa</taxon>
        <taxon>Chordata</taxon>
        <taxon>Craniata</taxon>
        <taxon>Vertebrata</taxon>
        <taxon>Euteleostomi</taxon>
        <taxon>Mammalia</taxon>
        <taxon>Eutheria</taxon>
        <taxon>Laurasiatheria</taxon>
        <taxon>Artiodactyla</taxon>
        <taxon>Ruminantia</taxon>
        <taxon>Pecora</taxon>
        <taxon>Bovidae</taxon>
        <taxon>Antilopinae</taxon>
        <taxon>Pantholops</taxon>
    </lineage>
</organism>
<gene>
    <name type="primary">MT-CYB</name>
    <name type="synonym">COB</name>
    <name type="synonym">CYTB</name>
    <name type="synonym">MTCYB</name>
</gene>
<name>CYB_PANHO</name>
<protein>
    <recommendedName>
        <fullName>Cytochrome b</fullName>
    </recommendedName>
    <alternativeName>
        <fullName>Complex III subunit 3</fullName>
    </alternativeName>
    <alternativeName>
        <fullName>Complex III subunit III</fullName>
    </alternativeName>
    <alternativeName>
        <fullName>Cytochrome b-c1 complex subunit 3</fullName>
    </alternativeName>
    <alternativeName>
        <fullName>Ubiquinol-cytochrome-c reductase complex cytochrome b subunit</fullName>
    </alternativeName>
</protein>